<reference key="1">
    <citation type="journal article" date="1997" name="Science">
        <title>The complete genome sequence of Escherichia coli K-12.</title>
        <authorList>
            <person name="Blattner F.R."/>
            <person name="Plunkett G. III"/>
            <person name="Bloch C.A."/>
            <person name="Perna N.T."/>
            <person name="Burland V."/>
            <person name="Riley M."/>
            <person name="Collado-Vides J."/>
            <person name="Glasner J.D."/>
            <person name="Rode C.K."/>
            <person name="Mayhew G.F."/>
            <person name="Gregor J."/>
            <person name="Davis N.W."/>
            <person name="Kirkpatrick H.A."/>
            <person name="Goeden M.A."/>
            <person name="Rose D.J."/>
            <person name="Mau B."/>
            <person name="Shao Y."/>
        </authorList>
    </citation>
    <scope>NUCLEOTIDE SEQUENCE [LARGE SCALE GENOMIC DNA]</scope>
    <source>
        <strain>K12 / MG1655 / ATCC 47076</strain>
    </source>
</reference>
<reference key="2">
    <citation type="journal article" date="2006" name="Mol. Syst. Biol.">
        <title>Highly accurate genome sequences of Escherichia coli K-12 strains MG1655 and W3110.</title>
        <authorList>
            <person name="Hayashi K."/>
            <person name="Morooka N."/>
            <person name="Yamamoto Y."/>
            <person name="Fujita K."/>
            <person name="Isono K."/>
            <person name="Choi S."/>
            <person name="Ohtsubo E."/>
            <person name="Baba T."/>
            <person name="Wanner B.L."/>
            <person name="Mori H."/>
            <person name="Horiuchi T."/>
        </authorList>
    </citation>
    <scope>NUCLEOTIDE SEQUENCE [LARGE SCALE GENOMIC DNA]</scope>
    <source>
        <strain>K12 / W3110 / ATCC 27325 / DSM 5911</strain>
    </source>
</reference>
<reference key="3">
    <citation type="journal article" date="1991" name="J. Bacteriol.">
        <title>deaD, a new Escherichia coli gene encoding a presumed ATP-dependent RNA helicase, can suppress a mutation in rpsB, the gene encoding ribosomal protein S2.</title>
        <authorList>
            <person name="Toone W.M."/>
            <person name="Rudd K.E."/>
            <person name="Friesen J.D."/>
        </authorList>
    </citation>
    <scope>PRELIMINARY NUCLEOTIDE SEQUENCE [GENOMIC DNA]</scope>
</reference>
<reference key="4">
    <citation type="journal article" date="1987" name="J. Biol. Chem.">
        <title>Nucleotide sequence of the pnp gene of Escherichia coli encoding polynucleotide phosphorylase. Homology of the primary structure of the protein with the RNA-binding domain of ribosomal protein S1.</title>
        <authorList>
            <person name="Regnier P."/>
            <person name="Grunberg-Manago M."/>
            <person name="Portier C."/>
        </authorList>
    </citation>
    <scope>NUCLEOTIDE SEQUENCE [GENOMIC DNA] OF 1-41</scope>
    <source>
        <strain>JCH5/JC553</strain>
    </source>
</reference>
<reference key="5">
    <citation type="journal article" date="2004" name="J. Biochem.">
        <title>Interaction of the Escherichia coli lipoprotein NlpI with periplasmic Prc (Tsp) protease.</title>
        <authorList>
            <person name="Tadokoro A."/>
            <person name="Hayashi H."/>
            <person name="Kishimoto T."/>
            <person name="Makino Y."/>
            <person name="Fujisaki S."/>
            <person name="Nishimura Y."/>
        </authorList>
    </citation>
    <scope>PROTEIN SEQUENCE OF 47-78; 83-92; 137-145 AND 221-272</scope>
    <scope>MUTAGENESIS OF GLY-103; 282-GLY--GLN-294; 283-GLN--GLN-294 AND 284-ASP--GLN-294</scope>
    <scope>INTERACTION WITH PRC AND IBPB</scope>
    <scope>DISRUPTION PHENOTYPE</scope>
    <scope>IDENTIFICATION BY MASS SPECTROMETRY</scope>
</reference>
<reference key="6">
    <citation type="journal article" date="1994" name="Nucleic Acids Res.">
        <title>Intrinsic and extrinsic approaches for detecting genes in a bacterial genome.</title>
        <authorList>
            <person name="Borodovsky M."/>
            <person name="Rudd K.E."/>
            <person name="Koonin E.V."/>
        </authorList>
    </citation>
    <scope>IDENTIFICATION</scope>
</reference>
<reference key="7">
    <citation type="journal article" date="1999" name="J. Bacteriol.">
        <title>Identification and characterization of a new lipoprotein, NlpI, in Escherichia coli K-12.</title>
        <authorList>
            <person name="Ohara M."/>
            <person name="Wu H.C."/>
            <person name="Sankaran K."/>
            <person name="Rick P.D."/>
        </authorList>
    </citation>
    <scope>FUNCTION</scope>
    <scope>INDUCTION</scope>
    <scope>DIACYLGLYCEROL AT CYS-19</scope>
    <scope>PALMITOYLATION AT CYS-19</scope>
    <scope>DISRUPTION PHENOTYPE</scope>
    <source>
        <strain>K12</strain>
    </source>
</reference>
<reference key="8">
    <citation type="journal article" date="2006" name="J. Bacteriol.">
        <title>Outer membrane vesicle production by Escherichia coli is independent of membrane instability.</title>
        <authorList>
            <person name="McBroom A.J."/>
            <person name="Johnson A.P."/>
            <person name="Vemulapalli S."/>
            <person name="Kuehn M.J."/>
        </authorList>
    </citation>
    <scope>DISRUPTION PHENOTYPE</scope>
</reference>
<reference key="9">
    <citation type="journal article" date="2006" name="Appl. Environ. Microbiol.">
        <title>Genes of Escherichia coli O157:H7 that are involved in high-pressure resistance.</title>
        <authorList>
            <person name="Malone A.S."/>
            <person name="Chung Y.K."/>
            <person name="Yousef A.E."/>
        </authorList>
    </citation>
    <scope>INDUCTION BY HIGH PRESSURE</scope>
    <scope>DISRUPTION PHENOTYPE</scope>
</reference>
<reference key="10">
    <citation type="journal article" date="2007" name="J. Bacteriol.">
        <title>Genome-wide screening of genes required for swarming motility in Escherichia coli K-12.</title>
        <authorList>
            <person name="Inoue T."/>
            <person name="Shingaki R."/>
            <person name="Hirose S."/>
            <person name="Waki K."/>
            <person name="Mori H."/>
            <person name="Fukui K."/>
        </authorList>
    </citation>
    <scope>DISRUPTION PHENOTYPE</scope>
    <source>
        <strain>K12 / BW25113</strain>
    </source>
</reference>
<reference key="11">
    <citation type="journal article" date="2007" name="Mol. Microbiol.">
        <title>Release of outer membrane vesicles by Gram-negative bacteria is a novel envelope stress response.</title>
        <authorList>
            <person name="McBroom A.J."/>
            <person name="Kuehn M.J."/>
        </authorList>
    </citation>
    <scope>DISRUPTION PHENOTYPE</scope>
</reference>
<reference key="12">
    <citation type="journal article" date="2010" name="Biochem. Biophys. Res. Commun.">
        <title>Global regulator H-NS and lipoprotein NlpI influence production of extracellular DNA in Escherichia coli.</title>
        <authorList>
            <person name="Sanchez-Torres V."/>
            <person name="Maeda T."/>
            <person name="Wood T.K."/>
        </authorList>
    </citation>
    <scope>FUNCTION</scope>
    <scope>DISRUPTION PHENOTYPE</scope>
</reference>
<reference key="13">
    <citation type="journal article" date="2005" name="FEBS J.">
        <title>The crystal structure of NlpI. A prokaryotic tetratricopeptide repeat protein with a globular fold.</title>
        <authorList>
            <person name="Wilson C.G."/>
            <person name="Kajander T."/>
            <person name="Regan L."/>
        </authorList>
    </citation>
    <scope>X-RAY CRYSTALLOGRAPHY (1.98 ANGSTROMS) OF 20-294</scope>
    <scope>SUBUNIT</scope>
    <scope>TPR REPEATS</scope>
</reference>
<keyword id="KW-0002">3D-structure</keyword>
<keyword id="KW-0131">Cell cycle</keyword>
<keyword id="KW-0132">Cell division</keyword>
<keyword id="KW-1003">Cell membrane</keyword>
<keyword id="KW-0903">Direct protein sequencing</keyword>
<keyword id="KW-0449">Lipoprotein</keyword>
<keyword id="KW-0472">Membrane</keyword>
<keyword id="KW-0564">Palmitate</keyword>
<keyword id="KW-1185">Reference proteome</keyword>
<keyword id="KW-0677">Repeat</keyword>
<keyword id="KW-0732">Signal</keyword>
<keyword id="KW-0802">TPR repeat</keyword>
<comment type="function">
    <text evidence="3 10">May be involved in cell division. May play a role in bacterial septation or regulation of cell wall degradation during cell division. Negatively controls the production of extracellular DNA (eDNA).</text>
</comment>
<comment type="subunit">
    <text evidence="4 5">Homodimer. Interacts with Prc and IbpB.</text>
</comment>
<comment type="subcellular location">
    <subcellularLocation>
        <location>Cell membrane</location>
        <topology>Lipid-anchor</topology>
    </subcellularLocation>
</comment>
<comment type="induction">
    <text evidence="3 6">By L-arabinose. By high-pressure at 400MPa for 5 minutes.</text>
</comment>
<comment type="disruption phenotype">
    <text evidence="3 4 6 7 8 9 10">Highly sensitive to osmotic conditions in low-salt medium and also thermosensitive under low-salt conditions. Shows pronounced filamentation at 42 degrees Celsius under low osmolarity, but not at 30 or 37 degrees. Growth in low-salt medium is severely restricted at 30 degrees and no growth is observed at 37 and 42 degrees Celsius. Shows increased eDNA production. Produces 100-fold more outer-membrane vesicles making the organism more resistant to toxins, and enhancing survival under stress. Higher sensitivity to ultra high pressure than wild-type counterparts (PubMed:16597971). Strongly represses cell swarming but no effect on cell swimming (PubMed:17122336).</text>
</comment>
<comment type="miscellaneous">
    <text>Processed by Prc protease in the C-terminus.</text>
</comment>
<comment type="sequence caution" evidence="11">
    <conflict type="frameshift">
        <sequence resource="EMBL" id="M63288"/>
    </conflict>
</comment>
<dbReference type="EMBL" id="U18997">
    <property type="protein sequence ID" value="AAA57966.1"/>
    <property type="molecule type" value="Genomic_DNA"/>
</dbReference>
<dbReference type="EMBL" id="U00096">
    <property type="protein sequence ID" value="AAC76197.1"/>
    <property type="molecule type" value="Genomic_DNA"/>
</dbReference>
<dbReference type="EMBL" id="AP009048">
    <property type="protein sequence ID" value="BAE77209.1"/>
    <property type="molecule type" value="Genomic_DNA"/>
</dbReference>
<dbReference type="EMBL" id="M63288">
    <property type="status" value="NOT_ANNOTATED_CDS"/>
    <property type="molecule type" value="Genomic_DNA"/>
</dbReference>
<dbReference type="EMBL" id="J02638">
    <property type="protein sequence ID" value="AAA83906.1"/>
    <property type="molecule type" value="Genomic_DNA"/>
</dbReference>
<dbReference type="PIR" id="G65106">
    <property type="entry name" value="G65106"/>
</dbReference>
<dbReference type="RefSeq" id="NP_417632.1">
    <property type="nucleotide sequence ID" value="NC_000913.3"/>
</dbReference>
<dbReference type="RefSeq" id="WP_000802080.1">
    <property type="nucleotide sequence ID" value="NZ_STEB01000012.1"/>
</dbReference>
<dbReference type="PDB" id="1XNF">
    <property type="method" value="X-ray"/>
    <property type="resolution" value="1.98 A"/>
    <property type="chains" value="A/B=20-294"/>
</dbReference>
<dbReference type="PDB" id="5WQL">
    <property type="method" value="X-ray"/>
    <property type="resolution" value="2.30 A"/>
    <property type="chains" value="A/B=20-294"/>
</dbReference>
<dbReference type="PDB" id="6IQQ">
    <property type="method" value="X-ray"/>
    <property type="resolution" value="2.80 A"/>
    <property type="chains" value="A/B=20-294"/>
</dbReference>
<dbReference type="PDB" id="6IQS">
    <property type="method" value="X-ray"/>
    <property type="resolution" value="2.69 A"/>
    <property type="chains" value="A/B=20-294"/>
</dbReference>
<dbReference type="PDB" id="6IQU">
    <property type="method" value="X-ray"/>
    <property type="resolution" value="2.90 A"/>
    <property type="chains" value="A=20-294"/>
</dbReference>
<dbReference type="PDB" id="8XUD">
    <property type="method" value="X-ray"/>
    <property type="resolution" value="3.49 A"/>
    <property type="chains" value="A/B=20-294"/>
</dbReference>
<dbReference type="PDB" id="8XUP">
    <property type="method" value="X-ray"/>
    <property type="resolution" value="2.80 A"/>
    <property type="chains" value="A/B/C/D=20-294"/>
</dbReference>
<dbReference type="PDBsum" id="1XNF"/>
<dbReference type="PDBsum" id="5WQL"/>
<dbReference type="PDBsum" id="6IQQ"/>
<dbReference type="PDBsum" id="6IQS"/>
<dbReference type="PDBsum" id="6IQU"/>
<dbReference type="PDBsum" id="8XUD"/>
<dbReference type="PDBsum" id="8XUP"/>
<dbReference type="SASBDB" id="P0AFB1"/>
<dbReference type="SMR" id="P0AFB1"/>
<dbReference type="BioGRID" id="4262430">
    <property type="interactions" value="258"/>
</dbReference>
<dbReference type="DIP" id="DIP-48051N"/>
<dbReference type="FunCoup" id="P0AFB1">
    <property type="interactions" value="44"/>
</dbReference>
<dbReference type="IntAct" id="P0AFB1">
    <property type="interactions" value="1"/>
</dbReference>
<dbReference type="STRING" id="511145.b3163"/>
<dbReference type="jPOST" id="P0AFB1"/>
<dbReference type="PaxDb" id="511145-b3163"/>
<dbReference type="EnsemblBacteria" id="AAC76197">
    <property type="protein sequence ID" value="AAC76197"/>
    <property type="gene ID" value="b3163"/>
</dbReference>
<dbReference type="GeneID" id="93778820"/>
<dbReference type="GeneID" id="947673"/>
<dbReference type="KEGG" id="ecj:JW3132"/>
<dbReference type="KEGG" id="eco:b3163"/>
<dbReference type="KEGG" id="ecoc:C3026_17230"/>
<dbReference type="PATRIC" id="fig|1411691.4.peg.3567"/>
<dbReference type="EchoBASE" id="EB2274"/>
<dbReference type="eggNOG" id="COG4785">
    <property type="taxonomic scope" value="Bacteria"/>
</dbReference>
<dbReference type="HOGENOM" id="CLU_071600_0_0_6"/>
<dbReference type="InParanoid" id="P0AFB1"/>
<dbReference type="OMA" id="YVEHRYS"/>
<dbReference type="OrthoDB" id="509324at2"/>
<dbReference type="PhylomeDB" id="P0AFB1"/>
<dbReference type="BioCyc" id="EcoCyc:EG12371-MONOMER"/>
<dbReference type="EvolutionaryTrace" id="P0AFB1"/>
<dbReference type="PRO" id="PR:P0AFB1"/>
<dbReference type="Proteomes" id="UP000000625">
    <property type="component" value="Chromosome"/>
</dbReference>
<dbReference type="GO" id="GO:0005886">
    <property type="term" value="C:plasma membrane"/>
    <property type="evidence" value="ECO:0007669"/>
    <property type="project" value="UniProtKB-SubCell"/>
</dbReference>
<dbReference type="GO" id="GO:0042803">
    <property type="term" value="F:protein homodimerization activity"/>
    <property type="evidence" value="ECO:0000314"/>
    <property type="project" value="EcoCyc"/>
</dbReference>
<dbReference type="GO" id="GO:0030674">
    <property type="term" value="F:protein-macromolecule adaptor activity"/>
    <property type="evidence" value="ECO:0000314"/>
    <property type="project" value="EcoCyc"/>
</dbReference>
<dbReference type="GO" id="GO:0051301">
    <property type="term" value="P:cell division"/>
    <property type="evidence" value="ECO:0000315"/>
    <property type="project" value="EcoCyc"/>
</dbReference>
<dbReference type="GO" id="GO:0000270">
    <property type="term" value="P:peptidoglycan metabolic process"/>
    <property type="evidence" value="ECO:0000314"/>
    <property type="project" value="EcoCyc"/>
</dbReference>
<dbReference type="FunFam" id="1.25.40.10:FF:000021">
    <property type="entry name" value="Lipoprotein NlpI"/>
    <property type="match status" value="1"/>
</dbReference>
<dbReference type="Gene3D" id="1.25.40.10">
    <property type="entry name" value="Tetratricopeptide repeat domain"/>
    <property type="match status" value="1"/>
</dbReference>
<dbReference type="InterPro" id="IPR023605">
    <property type="entry name" value="Lipoprotein_NlpI"/>
</dbReference>
<dbReference type="InterPro" id="IPR011990">
    <property type="entry name" value="TPR-like_helical_dom_sf"/>
</dbReference>
<dbReference type="InterPro" id="IPR019734">
    <property type="entry name" value="TPR_rpt"/>
</dbReference>
<dbReference type="InterPro" id="IPR050498">
    <property type="entry name" value="Ycf3"/>
</dbReference>
<dbReference type="NCBIfam" id="NF008391">
    <property type="entry name" value="PRK11189.1"/>
    <property type="match status" value="1"/>
</dbReference>
<dbReference type="PANTHER" id="PTHR44858">
    <property type="entry name" value="TETRATRICOPEPTIDE REPEAT PROTEIN 6"/>
    <property type="match status" value="1"/>
</dbReference>
<dbReference type="PANTHER" id="PTHR44858:SF1">
    <property type="entry name" value="UDP-N-ACETYLGLUCOSAMINE--PEPTIDE N-ACETYLGLUCOSAMINYLTRANSFERASE SPINDLY-RELATED"/>
    <property type="match status" value="1"/>
</dbReference>
<dbReference type="Pfam" id="PF13432">
    <property type="entry name" value="TPR_16"/>
    <property type="match status" value="1"/>
</dbReference>
<dbReference type="PIRSF" id="PIRSF004654">
    <property type="entry name" value="NlpI"/>
    <property type="match status" value="1"/>
</dbReference>
<dbReference type="SMART" id="SM00028">
    <property type="entry name" value="TPR"/>
    <property type="match status" value="3"/>
</dbReference>
<dbReference type="SUPFAM" id="SSF48452">
    <property type="entry name" value="TPR-like"/>
    <property type="match status" value="1"/>
</dbReference>
<dbReference type="PROSITE" id="PS51257">
    <property type="entry name" value="PROKAR_LIPOPROTEIN"/>
    <property type="match status" value="1"/>
</dbReference>
<dbReference type="PROSITE" id="PS50005">
    <property type="entry name" value="TPR"/>
    <property type="match status" value="3"/>
</dbReference>
<dbReference type="PROSITE" id="PS50293">
    <property type="entry name" value="TPR_REGION"/>
    <property type="match status" value="2"/>
</dbReference>
<evidence type="ECO:0000255" key="1">
    <source>
        <dbReference type="PROSITE-ProRule" id="PRU00303"/>
    </source>
</evidence>
<evidence type="ECO:0000255" key="2">
    <source>
        <dbReference type="PROSITE-ProRule" id="PRU00339"/>
    </source>
</evidence>
<evidence type="ECO:0000269" key="3">
    <source>
    </source>
</evidence>
<evidence type="ECO:0000269" key="4">
    <source>
    </source>
</evidence>
<evidence type="ECO:0000269" key="5">
    <source>
    </source>
</evidence>
<evidence type="ECO:0000269" key="6">
    <source>
    </source>
</evidence>
<evidence type="ECO:0000269" key="7">
    <source>
    </source>
</evidence>
<evidence type="ECO:0000269" key="8">
    <source>
    </source>
</evidence>
<evidence type="ECO:0000269" key="9">
    <source>
    </source>
</evidence>
<evidence type="ECO:0000269" key="10">
    <source>
    </source>
</evidence>
<evidence type="ECO:0000305" key="11"/>
<evidence type="ECO:0007829" key="12">
    <source>
        <dbReference type="PDB" id="1XNF"/>
    </source>
</evidence>
<proteinExistence type="evidence at protein level"/>
<feature type="signal peptide">
    <location>
        <begin position="1"/>
        <end position="18"/>
    </location>
</feature>
<feature type="chain" id="PRO_0000035692" description="Lipoprotein NlpI">
    <location>
        <begin position="19"/>
        <end position="294"/>
    </location>
</feature>
<feature type="repeat" description="TPR 1" evidence="2 5">
    <location>
        <begin position="62"/>
        <end position="95"/>
    </location>
</feature>
<feature type="repeat" description="TPR 2" evidence="2 5">
    <location>
        <begin position="96"/>
        <end position="129"/>
    </location>
</feature>
<feature type="repeat" description="TPR 3" evidence="2 5">
    <location>
        <begin position="234"/>
        <end position="267"/>
    </location>
</feature>
<feature type="lipid moiety-binding region" description="N-palmitoyl cysteine" evidence="1 3">
    <location>
        <position position="19"/>
    </location>
</feature>
<feature type="lipid moiety-binding region" description="S-diacylglycerol cysteine" evidence="1 3">
    <location>
        <position position="19"/>
    </location>
</feature>
<feature type="mutagenesis site" description="Loss of interaction with Prc and IbpB leading to thermosensitivity." evidence="4">
    <original>G</original>
    <variation>D</variation>
    <location>
        <position position="103"/>
    </location>
</feature>
<feature type="mutagenesis site" description="Loss of activity leading to thermosensitivity." evidence="4">
    <location>
        <begin position="282"/>
        <end position="294"/>
    </location>
</feature>
<feature type="mutagenesis site" description="No phenotype." evidence="4">
    <location>
        <begin position="283"/>
        <end position="294"/>
    </location>
</feature>
<feature type="mutagenesis site" description="No phenotype." evidence="4">
    <location>
        <begin position="284"/>
        <end position="294"/>
    </location>
</feature>
<feature type="helix" evidence="12">
    <location>
        <begin position="27"/>
        <end position="29"/>
    </location>
</feature>
<feature type="helix" evidence="12">
    <location>
        <begin position="38"/>
        <end position="51"/>
    </location>
</feature>
<feature type="helix" evidence="12">
    <location>
        <begin position="58"/>
        <end position="74"/>
    </location>
</feature>
<feature type="helix" evidence="12">
    <location>
        <begin position="78"/>
        <end position="91"/>
    </location>
</feature>
<feature type="helix" evidence="12">
    <location>
        <begin position="96"/>
        <end position="108"/>
    </location>
</feature>
<feature type="helix" evidence="12">
    <location>
        <begin position="112"/>
        <end position="125"/>
    </location>
</feature>
<feature type="helix" evidence="12">
    <location>
        <begin position="131"/>
        <end position="142"/>
    </location>
</feature>
<feature type="helix" evidence="12">
    <location>
        <begin position="146"/>
        <end position="159"/>
    </location>
</feature>
<feature type="helix" evidence="12">
    <location>
        <begin position="164"/>
        <end position="177"/>
    </location>
</feature>
<feature type="helix" evidence="12">
    <location>
        <begin position="179"/>
        <end position="192"/>
    </location>
</feature>
<feature type="helix" evidence="12">
    <location>
        <begin position="199"/>
        <end position="206"/>
    </location>
</feature>
<feature type="helix" evidence="12">
    <location>
        <begin position="212"/>
        <end position="222"/>
    </location>
</feature>
<feature type="helix" evidence="12">
    <location>
        <begin position="226"/>
        <end position="246"/>
    </location>
</feature>
<feature type="helix" evidence="12">
    <location>
        <begin position="250"/>
        <end position="261"/>
    </location>
</feature>
<feature type="helix" evidence="12">
    <location>
        <begin position="269"/>
        <end position="283"/>
    </location>
</feature>
<name>NLPI_ECOLI</name>
<accession>P0AFB1</accession>
<accession>P39833</accession>
<accession>Q2M947</accession>
<organism>
    <name type="scientific">Escherichia coli (strain K12)</name>
    <dbReference type="NCBI Taxonomy" id="83333"/>
    <lineage>
        <taxon>Bacteria</taxon>
        <taxon>Pseudomonadati</taxon>
        <taxon>Pseudomonadota</taxon>
        <taxon>Gammaproteobacteria</taxon>
        <taxon>Enterobacterales</taxon>
        <taxon>Enterobacteriaceae</taxon>
        <taxon>Escherichia</taxon>
    </lineage>
</organism>
<protein>
    <recommendedName>
        <fullName>Lipoprotein NlpI</fullName>
    </recommendedName>
</protein>
<sequence length="294" mass="33621">MKPFLRWCFVATALTLAGCSNTSWRKSEVLAVPLQPTLQQEVILARMEQILASRALTDDERAQLLYERGVLYDSLGLRALARNDFSQALAIRPDMPEVFNYLGIYLTQAGNFDAAYEAFDSVLELDPTYNYAHLNRGIALYYGGRDKLAQDDLLAFYQDDPNDPFRSLWLYLAEQKLDEKQAKEVLKQHFEKSDKEQWGWNIVEFYLGNISEQTLMERLKADATDNTSLAEHLSETNFYLGKYYLSLGDLDSATALFKLAVANNVHNFVEHRYALLELSLLGQDQDDLAESDQQ</sequence>
<gene>
    <name type="primary">nlpI</name>
    <name type="synonym">yhbM</name>
    <name type="ordered locus">b3163</name>
    <name type="ordered locus">JW3132</name>
</gene>